<gene>
    <name evidence="2" type="primary">gB</name>
    <name type="synonym">GI</name>
</gene>
<reference key="1">
    <citation type="journal article" date="1988" name="Virology">
        <title>Sequence of a bovine herpesvirus type-1 glycoprotein gene that is homologous to the herpes simplex gene for the glycoprotein gB.</title>
        <authorList>
            <person name="Misra V."/>
            <person name="Nelson R."/>
            <person name="Smith M."/>
        </authorList>
    </citation>
    <scope>NUCLEOTIDE SEQUENCE [GENOMIC DNA]</scope>
</reference>
<proteinExistence type="inferred from homology"/>
<protein>
    <recommendedName>
        <fullName evidence="2">Envelope glycoprotein B</fullName>
        <shortName evidence="2">gB</shortName>
    </recommendedName>
</protein>
<evidence type="ECO:0000255" key="1"/>
<evidence type="ECO:0000255" key="2">
    <source>
        <dbReference type="HAMAP-Rule" id="MF_04032"/>
    </source>
</evidence>
<evidence type="ECO:0000256" key="3">
    <source>
        <dbReference type="SAM" id="MobiDB-lite"/>
    </source>
</evidence>
<evidence type="ECO:0000305" key="4"/>
<sequence>MAARGGAERAAGAGDGRRGQRRHLRPGRVLAALRGPAAPGAGGARAALAAALLWATWALLLAAPAAGRPATTPPAPPPEEAASPAPPASPSPPGPDGDDAASPDNSTDVRAALRLAQAAGENSRFFVCPPPSGATVVRLAPARPCPEYGLGRNYTEGIGVIYKENIAPYTFKAIIYYKNVIVTTTWAGSTYAAITNQYTDRVPVGMGEITDLVDKKWRCLSKAEYLRSGRKVVAFDRDDDPWEAPLKPARLSAPGVRGWHTTDDVYTALGSAGLYRTGTSVNCIVEEVEARSVYPYDSFALSTGDIIYMSPFYGLREGAHREHTSYSPERFQQIEGYYKRDMATGRRLKEPVSRNFLRTQHVTVAWDWVPKRKNVCSLAKWREADEMLRDESRGNFRFTARSLSATFVSDSHTFALQNVPLSDCVIEEAEAAVERVYRERYNGTHVLSGSLETYLARGGFVVAFRPMLSNELAKLYLQELARSNGTLEGLFAAAAPKPGPRRARRPRRLRPAPGRGQRARRRRHAGGRVTTVSLAEFAALQFTHDHTRTSEHHVHRLASPWCLLQNKERALWAEAAKLNPSAAASAALDRRAAARMLGDAMAVTYCHELGEGRCSSRTRMRAPGGVCYSRRGSFFGNESEPVEGQLGEDNELLPGRELVEPCTANHKRYFRFGADYVYYENYAYVRRVPLAELEVISTFVDLNLTVLEDREFLPLEVYTRAELADTGLLDYSEIQRRNQLHELRFYDIDRVVKTDGNMAIMRGLANFFQGLGAVGQAVGTVVLGAAGAALSTVSGIASFIANPFGALATGLLVLAGLVAAFLAYRYISRLRSNPMKALYPITTRALKDDPGRNRPGEEEEEFDAAKLEQAREMIKYMSLVSAVERQEHKAKKSNKAARLLATRLTQLALRRRAPPEYQQLPMADVGGA</sequence>
<dbReference type="EMBL" id="M23257">
    <property type="protein sequence ID" value="AAA46013.1"/>
    <property type="status" value="ALT_FRAME"/>
    <property type="molecule type" value="Genomic_DNA"/>
</dbReference>
<dbReference type="PIR" id="A31166">
    <property type="entry name" value="VGBEBG"/>
</dbReference>
<dbReference type="SMR" id="P17471"/>
<dbReference type="GlyCosmos" id="P17471">
    <property type="glycosylation" value="6 sites, No reported glycans"/>
</dbReference>
<dbReference type="GO" id="GO:0044175">
    <property type="term" value="C:host cell endosome membrane"/>
    <property type="evidence" value="ECO:0007669"/>
    <property type="project" value="UniProtKB-SubCell"/>
</dbReference>
<dbReference type="GO" id="GO:0044178">
    <property type="term" value="C:host cell Golgi membrane"/>
    <property type="evidence" value="ECO:0007669"/>
    <property type="project" value="UniProtKB-SubCell"/>
</dbReference>
<dbReference type="GO" id="GO:0020002">
    <property type="term" value="C:host cell plasma membrane"/>
    <property type="evidence" value="ECO:0007669"/>
    <property type="project" value="UniProtKB-SubCell"/>
</dbReference>
<dbReference type="GO" id="GO:0016020">
    <property type="term" value="C:membrane"/>
    <property type="evidence" value="ECO:0007669"/>
    <property type="project" value="UniProtKB-KW"/>
</dbReference>
<dbReference type="GO" id="GO:0019031">
    <property type="term" value="C:viral envelope"/>
    <property type="evidence" value="ECO:0007669"/>
    <property type="project" value="UniProtKB-KW"/>
</dbReference>
<dbReference type="GO" id="GO:0055036">
    <property type="term" value="C:virion membrane"/>
    <property type="evidence" value="ECO:0007669"/>
    <property type="project" value="UniProtKB-SubCell"/>
</dbReference>
<dbReference type="GO" id="GO:0046718">
    <property type="term" value="P:symbiont entry into host cell"/>
    <property type="evidence" value="ECO:0007669"/>
    <property type="project" value="UniProtKB-KW"/>
</dbReference>
<dbReference type="GO" id="GO:0019062">
    <property type="term" value="P:virion attachment to host cell"/>
    <property type="evidence" value="ECO:0007669"/>
    <property type="project" value="UniProtKB-KW"/>
</dbReference>
<dbReference type="Gene3D" id="1.20.5.1890">
    <property type="match status" value="1"/>
</dbReference>
<dbReference type="Gene3D" id="2.30.29.100">
    <property type="match status" value="1"/>
</dbReference>
<dbReference type="Gene3D" id="2.30.30.1230">
    <property type="match status" value="1"/>
</dbReference>
<dbReference type="Gene3D" id="6.10.250.3280">
    <property type="match status" value="1"/>
</dbReference>
<dbReference type="HAMAP" id="MF_04032">
    <property type="entry name" value="HSV_GB"/>
    <property type="match status" value="1"/>
</dbReference>
<dbReference type="InterPro" id="IPR035377">
    <property type="entry name" value="Glycoprot_B_PH1"/>
</dbReference>
<dbReference type="InterPro" id="IPR035381">
    <property type="entry name" value="Glycoprot_B_PH2"/>
</dbReference>
<dbReference type="InterPro" id="IPR038631">
    <property type="entry name" value="Glycoprot_B_PH2_sf"/>
</dbReference>
<dbReference type="InterPro" id="IPR055341">
    <property type="entry name" value="Glycoprotein_B_ecto_C"/>
</dbReference>
<dbReference type="InterPro" id="IPR000234">
    <property type="entry name" value="Herpes_Glycoprot_B"/>
</dbReference>
<dbReference type="Pfam" id="PF17416">
    <property type="entry name" value="Glycoprot_B_PH1"/>
    <property type="match status" value="1"/>
</dbReference>
<dbReference type="Pfam" id="PF17417">
    <property type="entry name" value="Glycoprot_B_PH2"/>
    <property type="match status" value="1"/>
</dbReference>
<dbReference type="Pfam" id="PF00606">
    <property type="entry name" value="Glycoprotein_B"/>
    <property type="match status" value="1"/>
</dbReference>
<dbReference type="SUPFAM" id="SSF161008">
    <property type="entry name" value="Viral glycoprotein ectodomain-like"/>
    <property type="match status" value="1"/>
</dbReference>
<organism>
    <name type="scientific">Bovine herpesvirus 1.1 (strain P8-2)</name>
    <name type="common">BoHV-1</name>
    <name type="synonym">Infectious bovine rhinotracheitis virus</name>
    <dbReference type="NCBI Taxonomy" id="10324"/>
    <lineage>
        <taxon>Viruses</taxon>
        <taxon>Duplodnaviria</taxon>
        <taxon>Heunggongvirae</taxon>
        <taxon>Peploviricota</taxon>
        <taxon>Herviviricetes</taxon>
        <taxon>Herpesvirales</taxon>
        <taxon>Orthoherpesviridae</taxon>
        <taxon>Alphaherpesvirinae</taxon>
        <taxon>Varicellovirus</taxon>
        <taxon>Varicellovirus bovinealpha1</taxon>
    </lineage>
</organism>
<comment type="function">
    <text evidence="2">Envelope glycoprotein that forms spikes at the surface of virion envelope. Essential for the initial attachment to heparan sulfate moieties of the host cell surface proteoglycans. Involved in fusion of viral and cellular membranes leading to virus entry into the host cell. Following initial binding to its host receptors, membrane fusion is mediated by the fusion machinery composed at least of gB and the heterodimer gH/gL. May be involved in the fusion between the virion envelope and the outer nuclear membrane during virion egress.</text>
</comment>
<comment type="subunit">
    <text evidence="2">Homotrimer; disulfide-linked. Binds to heparan sulfate proteoglycans. Interacts with gH/gL heterodimer.</text>
</comment>
<comment type="subcellular location">
    <subcellularLocation>
        <location evidence="2">Virion membrane</location>
        <topology evidence="2">Single-pass type I membrane protein</topology>
    </subcellularLocation>
    <subcellularLocation>
        <location evidence="2">Host cell membrane</location>
        <topology evidence="2">Single-pass type I membrane protein</topology>
    </subcellularLocation>
    <subcellularLocation>
        <location evidence="2">Host endosome membrane</location>
        <topology evidence="2">Single-pass type I membrane protein</topology>
    </subcellularLocation>
    <subcellularLocation>
        <location evidence="2">Host Golgi apparatus membrane</location>
        <topology evidence="2">Single-pass type I membrane protein</topology>
    </subcellularLocation>
    <text evidence="2">During virion morphogenesis, this protein probably accumulates in the endosomes and trans-Golgi where secondary envelopment occurs. It is probably transported to the cell surface from where it is endocytosed and directed to the trans-Golgi network (TGN).</text>
</comment>
<comment type="PTM">
    <text evidence="4">A proteolytic cleavage by host furin generates two subunits that remain linked by disulfide bonds.</text>
</comment>
<comment type="similarity">
    <text evidence="2">Belongs to the herpesviridae glycoprotein B family.</text>
</comment>
<comment type="sequence caution" evidence="4">
    <conflict type="frameshift">
        <sequence resource="EMBL-CDS" id="AAA46013"/>
    </conflict>
</comment>
<feature type="signal peptide" evidence="1">
    <location>
        <begin position="1"/>
        <end position="62"/>
    </location>
</feature>
<feature type="chain" id="PRO_0000038167" description="Envelope glycoprotein B">
    <location>
        <begin position="63"/>
        <end position="928"/>
    </location>
</feature>
<feature type="topological domain" description="Virion surface" evidence="2">
    <location>
        <begin position="63"/>
        <end position="803"/>
    </location>
</feature>
<feature type="transmembrane region" description="Helical" evidence="2">
    <location>
        <begin position="804"/>
        <end position="824"/>
    </location>
</feature>
<feature type="topological domain" description="Intravirion" evidence="2">
    <location>
        <begin position="825"/>
        <end position="928"/>
    </location>
</feature>
<feature type="region of interest" description="Disordered" evidence="3">
    <location>
        <begin position="1"/>
        <end position="25"/>
    </location>
</feature>
<feature type="region of interest" description="Disordered" evidence="3">
    <location>
        <begin position="67"/>
        <end position="105"/>
    </location>
</feature>
<feature type="region of interest" description="Involved in fusion and/or binding to host membrane" evidence="2">
    <location>
        <begin position="185"/>
        <end position="191"/>
    </location>
</feature>
<feature type="region of interest" description="Involved in fusion and/or binding to host membrane" evidence="2">
    <location>
        <begin position="270"/>
        <end position="277"/>
    </location>
</feature>
<feature type="region of interest" description="Disordered" evidence="3">
    <location>
        <begin position="495"/>
        <end position="525"/>
    </location>
</feature>
<feature type="region of interest" description="Hydrophobic membrane proximal region" evidence="2">
    <location>
        <begin position="748"/>
        <end position="801"/>
    </location>
</feature>
<feature type="region of interest" description="Hydrophobic membrane proximal region">
    <location>
        <begin position="781"/>
        <end position="801"/>
    </location>
</feature>
<feature type="short sequence motif" description="Golgi targeting" evidence="2">
    <location>
        <begin position="876"/>
        <end position="879"/>
    </location>
</feature>
<feature type="short sequence motif" description="Internalization motif" evidence="2">
    <location>
        <begin position="917"/>
        <end position="920"/>
    </location>
</feature>
<feature type="compositionally biased region" description="Low complexity" evidence="3">
    <location>
        <begin position="1"/>
        <end position="12"/>
    </location>
</feature>
<feature type="compositionally biased region" description="Pro residues" evidence="3">
    <location>
        <begin position="71"/>
        <end position="95"/>
    </location>
</feature>
<feature type="compositionally biased region" description="Basic residues" evidence="3">
    <location>
        <begin position="499"/>
        <end position="510"/>
    </location>
</feature>
<feature type="site" description="Cleavage; by host furin" evidence="1">
    <location>
        <begin position="505"/>
        <end position="506"/>
    </location>
</feature>
<feature type="glycosylation site" description="N-linked (GlcNAc...) asparagine; by host" evidence="2">
    <location>
        <position position="105"/>
    </location>
</feature>
<feature type="glycosylation site" description="N-linked (GlcNAc...) asparagine; by host" evidence="2">
    <location>
        <position position="153"/>
    </location>
</feature>
<feature type="glycosylation site" description="N-linked (GlcNAc...) asparagine; by host" evidence="2">
    <location>
        <position position="442"/>
    </location>
</feature>
<feature type="glycosylation site" description="N-linked (GlcNAc...) asparagine; by host" evidence="2">
    <location>
        <position position="484"/>
    </location>
</feature>
<feature type="glycosylation site" description="N-linked (GlcNAc...) asparagine; by host" evidence="2">
    <location>
        <position position="637"/>
    </location>
</feature>
<feature type="glycosylation site" description="N-linked (GlcNAc...) asparagine; by host" evidence="2">
    <location>
        <position position="703"/>
    </location>
</feature>
<feature type="disulfide bond" evidence="2">
    <location>
        <begin position="128"/>
        <end position="606"/>
    </location>
</feature>
<feature type="disulfide bond" evidence="2">
    <location>
        <begin position="145"/>
        <end position="562"/>
    </location>
</feature>
<feature type="disulfide bond" evidence="2">
    <location>
        <begin position="219"/>
        <end position="283"/>
    </location>
</feature>
<feature type="disulfide bond" evidence="2">
    <location>
        <begin position="376"/>
        <end position="424"/>
    </location>
</feature>
<feature type="disulfide bond" evidence="2">
    <location>
        <begin position="627"/>
        <end position="662"/>
    </location>
</feature>
<feature type="sequence conflict" description="In Ref. 1; AAA46013." evidence="4" ref="1">
    <original>S</original>
    <variation>T</variation>
    <location>
        <position position="409"/>
    </location>
</feature>
<feature type="sequence conflict" description="In Ref. 1; AAA46013." evidence="4" ref="1">
    <original>G</original>
    <variation>P</variation>
    <location>
        <position position="673"/>
    </location>
</feature>
<accession>P17471</accession>
<keyword id="KW-1015">Disulfide bond</keyword>
<keyword id="KW-0325">Glycoprotein</keyword>
<keyword id="KW-1032">Host cell membrane</keyword>
<keyword id="KW-1039">Host endosome</keyword>
<keyword id="KW-1040">Host Golgi apparatus</keyword>
<keyword id="KW-1043">Host membrane</keyword>
<keyword id="KW-0945">Host-virus interaction</keyword>
<keyword id="KW-0472">Membrane</keyword>
<keyword id="KW-0732">Signal</keyword>
<keyword id="KW-0812">Transmembrane</keyword>
<keyword id="KW-1133">Transmembrane helix</keyword>
<keyword id="KW-1161">Viral attachment to host cell</keyword>
<keyword id="KW-0261">Viral envelope protein</keyword>
<keyword id="KW-0946">Virion</keyword>
<keyword id="KW-1160">Virus entry into host cell</keyword>
<organismHost>
    <name type="scientific">Bos taurus</name>
    <name type="common">Bovine</name>
    <dbReference type="NCBI Taxonomy" id="9913"/>
</organismHost>
<name>GB_BHV1P</name>